<accession>Q2SYC5</accession>
<proteinExistence type="evidence at protein level"/>
<comment type="function">
    <text evidence="1">Involved in transcription antitermination. Required for transcription of ribosomal RNA (rRNA) genes. Binds specifically to the boxA antiterminator sequence of the ribosomal RNA (rrn) operons.</text>
</comment>
<comment type="similarity">
    <text evidence="1">Belongs to the NusB family.</text>
</comment>
<organism>
    <name type="scientific">Burkholderia thailandensis (strain ATCC 700388 / DSM 13276 / CCUG 48851 / CIP 106301 / E264)</name>
    <dbReference type="NCBI Taxonomy" id="271848"/>
    <lineage>
        <taxon>Bacteria</taxon>
        <taxon>Pseudomonadati</taxon>
        <taxon>Pseudomonadota</taxon>
        <taxon>Betaproteobacteria</taxon>
        <taxon>Burkholderiales</taxon>
        <taxon>Burkholderiaceae</taxon>
        <taxon>Burkholderia</taxon>
        <taxon>pseudomallei group</taxon>
    </lineage>
</organism>
<feature type="chain" id="PRO_0000265499" description="Transcription antitermination protein NusB">
    <location>
        <begin position="1"/>
        <end position="145"/>
    </location>
</feature>
<feature type="strand" evidence="2">
    <location>
        <begin position="1"/>
        <end position="3"/>
    </location>
</feature>
<feature type="helix" evidence="2">
    <location>
        <begin position="6"/>
        <end position="23"/>
    </location>
</feature>
<feature type="helix" evidence="2">
    <location>
        <begin position="27"/>
        <end position="36"/>
    </location>
</feature>
<feature type="helix" evidence="2">
    <location>
        <begin position="39"/>
        <end position="42"/>
    </location>
</feature>
<feature type="helix" evidence="2">
    <location>
        <begin position="47"/>
        <end position="69"/>
    </location>
</feature>
<feature type="strand" evidence="2">
    <location>
        <begin position="70"/>
        <end position="72"/>
    </location>
</feature>
<feature type="helix" evidence="2">
    <location>
        <begin position="74"/>
        <end position="76"/>
    </location>
</feature>
<feature type="helix" evidence="2">
    <location>
        <begin position="79"/>
        <end position="95"/>
    </location>
</feature>
<feature type="helix" evidence="2">
    <location>
        <begin position="100"/>
        <end position="114"/>
    </location>
</feature>
<feature type="helix" evidence="2">
    <location>
        <begin position="116"/>
        <end position="134"/>
    </location>
</feature>
<feature type="helix" evidence="2">
    <location>
        <begin position="136"/>
        <end position="139"/>
    </location>
</feature>
<dbReference type="EMBL" id="CP000086">
    <property type="protein sequence ID" value="ABC36303.1"/>
    <property type="molecule type" value="Genomic_DNA"/>
</dbReference>
<dbReference type="RefSeq" id="WP_004185707.1">
    <property type="nucleotide sequence ID" value="NZ_CP008785.1"/>
</dbReference>
<dbReference type="PDB" id="6CKQ">
    <property type="method" value="NMR"/>
    <property type="chains" value="A=1-145"/>
</dbReference>
<dbReference type="PDBsum" id="6CKQ"/>
<dbReference type="BMRB" id="Q2SYC5"/>
<dbReference type="SMR" id="Q2SYC5"/>
<dbReference type="GeneID" id="93061205"/>
<dbReference type="KEGG" id="bte:BTH_I1529"/>
<dbReference type="HOGENOM" id="CLU_087843_4_1_4"/>
<dbReference type="Proteomes" id="UP000001930">
    <property type="component" value="Chromosome I"/>
</dbReference>
<dbReference type="GO" id="GO:0005829">
    <property type="term" value="C:cytosol"/>
    <property type="evidence" value="ECO:0007669"/>
    <property type="project" value="TreeGrafter"/>
</dbReference>
<dbReference type="GO" id="GO:0003723">
    <property type="term" value="F:RNA binding"/>
    <property type="evidence" value="ECO:0007669"/>
    <property type="project" value="UniProtKB-UniRule"/>
</dbReference>
<dbReference type="GO" id="GO:0006353">
    <property type="term" value="P:DNA-templated transcription termination"/>
    <property type="evidence" value="ECO:0007669"/>
    <property type="project" value="UniProtKB-UniRule"/>
</dbReference>
<dbReference type="GO" id="GO:0031564">
    <property type="term" value="P:transcription antitermination"/>
    <property type="evidence" value="ECO:0007669"/>
    <property type="project" value="UniProtKB-KW"/>
</dbReference>
<dbReference type="Gene3D" id="1.10.940.10">
    <property type="entry name" value="NusB-like"/>
    <property type="match status" value="1"/>
</dbReference>
<dbReference type="HAMAP" id="MF_00073">
    <property type="entry name" value="NusB"/>
    <property type="match status" value="1"/>
</dbReference>
<dbReference type="InterPro" id="IPR035926">
    <property type="entry name" value="NusB-like_sf"/>
</dbReference>
<dbReference type="InterPro" id="IPR011605">
    <property type="entry name" value="NusB_fam"/>
</dbReference>
<dbReference type="InterPro" id="IPR006027">
    <property type="entry name" value="NusB_RsmB_TIM44"/>
</dbReference>
<dbReference type="NCBIfam" id="TIGR01951">
    <property type="entry name" value="nusB"/>
    <property type="match status" value="1"/>
</dbReference>
<dbReference type="PANTHER" id="PTHR11078:SF3">
    <property type="entry name" value="ANTITERMINATION NUSB DOMAIN-CONTAINING PROTEIN"/>
    <property type="match status" value="1"/>
</dbReference>
<dbReference type="PANTHER" id="PTHR11078">
    <property type="entry name" value="N UTILIZATION SUBSTANCE PROTEIN B-RELATED"/>
    <property type="match status" value="1"/>
</dbReference>
<dbReference type="Pfam" id="PF01029">
    <property type="entry name" value="NusB"/>
    <property type="match status" value="1"/>
</dbReference>
<dbReference type="SUPFAM" id="SSF48013">
    <property type="entry name" value="NusB-like"/>
    <property type="match status" value="1"/>
</dbReference>
<protein>
    <recommendedName>
        <fullName evidence="1">Transcription antitermination protein NusB</fullName>
    </recommendedName>
    <alternativeName>
        <fullName evidence="1">Antitermination factor NusB</fullName>
    </alternativeName>
</protein>
<gene>
    <name evidence="1" type="primary">nusB</name>
    <name type="ordered locus">BTH_I1529</name>
</gene>
<name>NUSB_BURTA</name>
<keyword id="KW-0002">3D-structure</keyword>
<keyword id="KW-0694">RNA-binding</keyword>
<keyword id="KW-0804">Transcription</keyword>
<keyword id="KW-0889">Transcription antitermination</keyword>
<keyword id="KW-0805">Transcription regulation</keyword>
<evidence type="ECO:0000255" key="1">
    <source>
        <dbReference type="HAMAP-Rule" id="MF_00073"/>
    </source>
</evidence>
<evidence type="ECO:0007829" key="2">
    <source>
        <dbReference type="PDB" id="6CKQ"/>
    </source>
</evidence>
<sequence>MKKSARRQSRELATQGLYQWLLSNAAPGEIDAQLRGALGYDKADKTLLDTILHGVIREHATLAEAISPSLDRPIDQLSPVERAVLLIATYELTHQIETPYRVIINEAVELAKTFGGSDGYKYVNGVLDKLAVKLRPAETQARRGA</sequence>
<reference key="1">
    <citation type="journal article" date="2005" name="BMC Genomics">
        <title>Bacterial genome adaptation to niches: divergence of the potential virulence genes in three Burkholderia species of different survival strategies.</title>
        <authorList>
            <person name="Kim H.S."/>
            <person name="Schell M.A."/>
            <person name="Yu Y."/>
            <person name="Ulrich R.L."/>
            <person name="Sarria S.H."/>
            <person name="Nierman W.C."/>
            <person name="DeShazer D."/>
        </authorList>
    </citation>
    <scope>NUCLEOTIDE SEQUENCE [LARGE SCALE GENOMIC DNA]</scope>
    <source>
        <strain>ATCC 700388 / DSM 13276 / CCUG 48851 / CIP 106301 / E264</strain>
    </source>
</reference>